<comment type="function">
    <text evidence="1">Required for pre-18S rRNA processing. May bind microtubules (By similarity).</text>
</comment>
<comment type="subcellular location">
    <subcellularLocation>
        <location evidence="1">Nucleus</location>
        <location evidence="1">Nucleolus</location>
    </subcellularLocation>
</comment>
<comment type="similarity">
    <text evidence="4">Belongs to the NOP5/NOP56 family.</text>
</comment>
<gene>
    <name type="primary">NOP58</name>
    <name type="ordered locus">YALI0B00946g</name>
</gene>
<accession>Q6CG46</accession>
<feature type="chain" id="PRO_0000350995" description="Nucleolar protein 58">
    <location>
        <begin position="1"/>
        <end position="515"/>
    </location>
</feature>
<feature type="domain" description="Nop" evidence="2">
    <location>
        <begin position="283"/>
        <end position="403"/>
    </location>
</feature>
<feature type="region of interest" description="Disordered" evidence="3">
    <location>
        <begin position="428"/>
        <end position="515"/>
    </location>
</feature>
<feature type="compositionally biased region" description="Acidic residues" evidence="3">
    <location>
        <begin position="445"/>
        <end position="456"/>
    </location>
</feature>
<feature type="compositionally biased region" description="Basic residues" evidence="3">
    <location>
        <begin position="460"/>
        <end position="499"/>
    </location>
</feature>
<organism>
    <name type="scientific">Yarrowia lipolytica (strain CLIB 122 / E 150)</name>
    <name type="common">Yeast</name>
    <name type="synonym">Candida lipolytica</name>
    <dbReference type="NCBI Taxonomy" id="284591"/>
    <lineage>
        <taxon>Eukaryota</taxon>
        <taxon>Fungi</taxon>
        <taxon>Dikarya</taxon>
        <taxon>Ascomycota</taxon>
        <taxon>Saccharomycotina</taxon>
        <taxon>Dipodascomycetes</taxon>
        <taxon>Dipodascales</taxon>
        <taxon>Dipodascales incertae sedis</taxon>
        <taxon>Yarrowia</taxon>
    </lineage>
</organism>
<reference key="1">
    <citation type="journal article" date="2004" name="Nature">
        <title>Genome evolution in yeasts.</title>
        <authorList>
            <person name="Dujon B."/>
            <person name="Sherman D."/>
            <person name="Fischer G."/>
            <person name="Durrens P."/>
            <person name="Casaregola S."/>
            <person name="Lafontaine I."/>
            <person name="de Montigny J."/>
            <person name="Marck C."/>
            <person name="Neuveglise C."/>
            <person name="Talla E."/>
            <person name="Goffard N."/>
            <person name="Frangeul L."/>
            <person name="Aigle M."/>
            <person name="Anthouard V."/>
            <person name="Babour A."/>
            <person name="Barbe V."/>
            <person name="Barnay S."/>
            <person name="Blanchin S."/>
            <person name="Beckerich J.-M."/>
            <person name="Beyne E."/>
            <person name="Bleykasten C."/>
            <person name="Boisrame A."/>
            <person name="Boyer J."/>
            <person name="Cattolico L."/>
            <person name="Confanioleri F."/>
            <person name="de Daruvar A."/>
            <person name="Despons L."/>
            <person name="Fabre E."/>
            <person name="Fairhead C."/>
            <person name="Ferry-Dumazet H."/>
            <person name="Groppi A."/>
            <person name="Hantraye F."/>
            <person name="Hennequin C."/>
            <person name="Jauniaux N."/>
            <person name="Joyet P."/>
            <person name="Kachouri R."/>
            <person name="Kerrest A."/>
            <person name="Koszul R."/>
            <person name="Lemaire M."/>
            <person name="Lesur I."/>
            <person name="Ma L."/>
            <person name="Muller H."/>
            <person name="Nicaud J.-M."/>
            <person name="Nikolski M."/>
            <person name="Oztas S."/>
            <person name="Ozier-Kalogeropoulos O."/>
            <person name="Pellenz S."/>
            <person name="Potier S."/>
            <person name="Richard G.-F."/>
            <person name="Straub M.-L."/>
            <person name="Suleau A."/>
            <person name="Swennen D."/>
            <person name="Tekaia F."/>
            <person name="Wesolowski-Louvel M."/>
            <person name="Westhof E."/>
            <person name="Wirth B."/>
            <person name="Zeniou-Meyer M."/>
            <person name="Zivanovic Y."/>
            <person name="Bolotin-Fukuhara M."/>
            <person name="Thierry A."/>
            <person name="Bouchier C."/>
            <person name="Caudron B."/>
            <person name="Scarpelli C."/>
            <person name="Gaillardin C."/>
            <person name="Weissenbach J."/>
            <person name="Wincker P."/>
            <person name="Souciet J.-L."/>
        </authorList>
    </citation>
    <scope>NUCLEOTIDE SEQUENCE [LARGE SCALE GENOMIC DNA]</scope>
    <source>
        <strain>CLIB 122 / E 150</strain>
    </source>
</reference>
<evidence type="ECO:0000250" key="1"/>
<evidence type="ECO:0000255" key="2">
    <source>
        <dbReference type="PROSITE-ProRule" id="PRU00690"/>
    </source>
</evidence>
<evidence type="ECO:0000256" key="3">
    <source>
        <dbReference type="SAM" id="MobiDB-lite"/>
    </source>
</evidence>
<evidence type="ECO:0000305" key="4"/>
<sequence>MTFILTETSAGYAVLKAKDKKIYKSESILEELSTPELVTSQFKVKGFSKFDSAASALEEVNAIVDGRVSDKLAALLNEFKDEKKSALVVADPKLGNAINKLDLPFDVVAESASLDLFRAIRENLPSLLPGLTEKDLATMSLGLAHSLGRHKLKFSPDKVDTMIVQAIALLDDLDKELNTYAMRIKEWYGWHFPEMAKIVADNIAYARVIKTMGYRSNASETDLSEVLPEEVEAALKVAAEVSMGTEITEFDLENIQCLADQVIDFAEYREQLSNYLNARMAAIAPNLTALVGELVGARLIAHSGSLVNLAKAPASTVQILGAEKALFRALKTKHDTPKYGIIYHASLIGQASGKNKGKIARMLAAKASVSMRYDAFAEEREDVPILGIDNRIKVENRLRQLEGKEIVGTVRPDVNKIEHKKVDLSTGKQYNADADTVGNTTAGADSDDEDSDSEEEVKEKKAKKEKKEKKDKKEKKDKKDKKEKKDKKEKKEKKDKKRKREDDDDEPKKEKKSKK</sequence>
<protein>
    <recommendedName>
        <fullName>Nucleolar protein 58</fullName>
    </recommendedName>
</protein>
<dbReference type="EMBL" id="CR382128">
    <property type="protein sequence ID" value="CAG82580.1"/>
    <property type="molecule type" value="Genomic_DNA"/>
</dbReference>
<dbReference type="RefSeq" id="XP_500366.1">
    <property type="nucleotide sequence ID" value="XM_500366.1"/>
</dbReference>
<dbReference type="SMR" id="Q6CG46"/>
<dbReference type="FunCoup" id="Q6CG46">
    <property type="interactions" value="1682"/>
</dbReference>
<dbReference type="STRING" id="284591.Q6CG46"/>
<dbReference type="EnsemblFungi" id="CAG82580">
    <property type="protein sequence ID" value="CAG82580"/>
    <property type="gene ID" value="YALI0_B00946g"/>
</dbReference>
<dbReference type="KEGG" id="yli:2907148"/>
<dbReference type="VEuPathDB" id="FungiDB:YALI0_B00946g"/>
<dbReference type="HOGENOM" id="CLU_015495_5_2_1"/>
<dbReference type="InParanoid" id="Q6CG46"/>
<dbReference type="OMA" id="MGMRSNW"/>
<dbReference type="OrthoDB" id="24493at4891"/>
<dbReference type="Proteomes" id="UP000001300">
    <property type="component" value="Chromosome B"/>
</dbReference>
<dbReference type="GO" id="GO:0031428">
    <property type="term" value="C:box C/D methylation guide snoRNP complex"/>
    <property type="evidence" value="ECO:0000318"/>
    <property type="project" value="GO_Central"/>
</dbReference>
<dbReference type="GO" id="GO:0005730">
    <property type="term" value="C:nucleolus"/>
    <property type="evidence" value="ECO:0007669"/>
    <property type="project" value="UniProtKB-SubCell"/>
</dbReference>
<dbReference type="GO" id="GO:0032040">
    <property type="term" value="C:small-subunit processome"/>
    <property type="evidence" value="ECO:0000318"/>
    <property type="project" value="GO_Central"/>
</dbReference>
<dbReference type="GO" id="GO:0030515">
    <property type="term" value="F:snoRNA binding"/>
    <property type="evidence" value="ECO:0000318"/>
    <property type="project" value="GO_Central"/>
</dbReference>
<dbReference type="GO" id="GO:0017069">
    <property type="term" value="F:snRNA binding"/>
    <property type="evidence" value="ECO:0007669"/>
    <property type="project" value="EnsemblFungi"/>
</dbReference>
<dbReference type="GO" id="GO:0000494">
    <property type="term" value="P:box C/D sno(s)RNA 3'-end processing"/>
    <property type="evidence" value="ECO:0007669"/>
    <property type="project" value="EnsemblFungi"/>
</dbReference>
<dbReference type="GO" id="GO:0000480">
    <property type="term" value="P:endonucleolytic cleavage in 5'-ETS of tricistronic rRNA transcript (SSU-rRNA, 5.8S rRNA, LSU-rRNA)"/>
    <property type="evidence" value="ECO:0007669"/>
    <property type="project" value="EnsemblFungi"/>
</dbReference>
<dbReference type="GO" id="GO:0000447">
    <property type="term" value="P:endonucleolytic cleavage in ITS1 to separate SSU-rRNA from 5.8S rRNA and LSU-rRNA from tricistronic rRNA transcript (SSU-rRNA, 5.8S rRNA, LSU-rRNA)"/>
    <property type="evidence" value="ECO:0007669"/>
    <property type="project" value="EnsemblFungi"/>
</dbReference>
<dbReference type="GO" id="GO:0000472">
    <property type="term" value="P:endonucleolytic cleavage to generate mature 5'-end of SSU-rRNA from (SSU-rRNA, 5.8S rRNA, LSU-rRNA)"/>
    <property type="evidence" value="ECO:0007669"/>
    <property type="project" value="EnsemblFungi"/>
</dbReference>
<dbReference type="GO" id="GO:1902570">
    <property type="term" value="P:protein localization to nucleolus"/>
    <property type="evidence" value="ECO:0007669"/>
    <property type="project" value="EnsemblFungi"/>
</dbReference>
<dbReference type="GO" id="GO:0000452">
    <property type="term" value="P:snoRNA guided rRNA 2'-O-methylation"/>
    <property type="evidence" value="ECO:0007669"/>
    <property type="project" value="EnsemblFungi"/>
</dbReference>
<dbReference type="FunFam" id="1.10.246.90:FF:000003">
    <property type="entry name" value="Nucleolar protein 58"/>
    <property type="match status" value="1"/>
</dbReference>
<dbReference type="FunFam" id="1.10.287.4070:FF:000001">
    <property type="entry name" value="Probable Nucleolar protein 58"/>
    <property type="match status" value="1"/>
</dbReference>
<dbReference type="Gene3D" id="1.10.287.4070">
    <property type="match status" value="1"/>
</dbReference>
<dbReference type="Gene3D" id="1.10.246.90">
    <property type="entry name" value="Nop domain"/>
    <property type="match status" value="1"/>
</dbReference>
<dbReference type="InterPro" id="IPR045056">
    <property type="entry name" value="Nop56/Nop58"/>
</dbReference>
<dbReference type="InterPro" id="IPR012974">
    <property type="entry name" value="NOP58/56_N"/>
</dbReference>
<dbReference type="InterPro" id="IPR042239">
    <property type="entry name" value="Nop_C"/>
</dbReference>
<dbReference type="InterPro" id="IPR002687">
    <property type="entry name" value="Nop_dom"/>
</dbReference>
<dbReference type="InterPro" id="IPR036070">
    <property type="entry name" value="Nop_dom_sf"/>
</dbReference>
<dbReference type="InterPro" id="IPR012976">
    <property type="entry name" value="NOSIC"/>
</dbReference>
<dbReference type="PANTHER" id="PTHR10894">
    <property type="entry name" value="NUCLEOLAR PROTEIN 5 NUCLEOLAR PROTEIN NOP5 NOP58"/>
    <property type="match status" value="1"/>
</dbReference>
<dbReference type="PANTHER" id="PTHR10894:SF1">
    <property type="entry name" value="NUCLEOLAR PROTEIN 58"/>
    <property type="match status" value="1"/>
</dbReference>
<dbReference type="Pfam" id="PF01798">
    <property type="entry name" value="Nop"/>
    <property type="match status" value="1"/>
</dbReference>
<dbReference type="Pfam" id="PF08156">
    <property type="entry name" value="NOP5NT"/>
    <property type="match status" value="1"/>
</dbReference>
<dbReference type="SMART" id="SM00931">
    <property type="entry name" value="NOSIC"/>
    <property type="match status" value="1"/>
</dbReference>
<dbReference type="SUPFAM" id="SSF89124">
    <property type="entry name" value="Nop domain"/>
    <property type="match status" value="1"/>
</dbReference>
<dbReference type="PROSITE" id="PS51358">
    <property type="entry name" value="NOP"/>
    <property type="match status" value="1"/>
</dbReference>
<keyword id="KW-0539">Nucleus</keyword>
<keyword id="KW-1185">Reference proteome</keyword>
<keyword id="KW-0687">Ribonucleoprotein</keyword>
<keyword id="KW-0690">Ribosome biogenesis</keyword>
<keyword id="KW-0698">rRNA processing</keyword>
<proteinExistence type="inferred from homology"/>
<name>NOP58_YARLI</name>